<sequence length="159" mass="16878">MADARDMELIKPYNGDPFTGHLSTPISDSDFTRTFIGNLPAYRKGLSPILRGLEIGMAHGYFLIGPWVKLGPLRDSDVANLGGLISGIALILIATACLAAYGIVSFQKEEAAANPLNTAEGWSQFTAGFFVGATGGAFVAFTLLEKFDVVDGIMTGLFN</sequence>
<keyword id="KW-0472">Membrane</keyword>
<keyword id="KW-0602">Photosynthesis</keyword>
<keyword id="KW-0603">Photosystem I</keyword>
<keyword id="KW-0793">Thylakoid</keyword>
<keyword id="KW-0812">Transmembrane</keyword>
<keyword id="KW-1133">Transmembrane helix</keyword>
<feature type="chain" id="PRO_1000135235" description="Photosystem I reaction center subunit XI">
    <location>
        <begin position="1"/>
        <end position="159"/>
    </location>
</feature>
<feature type="transmembrane region" description="Helical" evidence="1">
    <location>
        <begin position="53"/>
        <end position="73"/>
    </location>
</feature>
<feature type="transmembrane region" description="Helical" evidence="1">
    <location>
        <begin position="84"/>
        <end position="104"/>
    </location>
</feature>
<feature type="transmembrane region" description="Helical" evidence="1">
    <location>
        <begin position="125"/>
        <end position="145"/>
    </location>
</feature>
<name>PSAL_CYAP4</name>
<comment type="subcellular location">
    <subcellularLocation>
        <location evidence="1">Cellular thylakoid membrane</location>
        <topology evidence="1">Multi-pass membrane protein</topology>
    </subcellularLocation>
</comment>
<comment type="similarity">
    <text evidence="1">Belongs to the PsaL family.</text>
</comment>
<protein>
    <recommendedName>
        <fullName evidence="1">Photosystem I reaction center subunit XI</fullName>
    </recommendedName>
    <alternativeName>
        <fullName evidence="1">PSI subunit V</fullName>
    </alternativeName>
    <alternativeName>
        <fullName evidence="1">PSI-L</fullName>
    </alternativeName>
</protein>
<accession>B8HRF0</accession>
<proteinExistence type="inferred from homology"/>
<organism>
    <name type="scientific">Cyanothece sp. (strain PCC 7425 / ATCC 29141)</name>
    <dbReference type="NCBI Taxonomy" id="395961"/>
    <lineage>
        <taxon>Bacteria</taxon>
        <taxon>Bacillati</taxon>
        <taxon>Cyanobacteriota</taxon>
        <taxon>Cyanophyceae</taxon>
        <taxon>Gomontiellales</taxon>
        <taxon>Cyanothecaceae</taxon>
        <taxon>Cyanothece</taxon>
    </lineage>
</organism>
<gene>
    <name evidence="1" type="primary">psaL</name>
    <name type="ordered locus">Cyan7425_1770</name>
</gene>
<reference key="1">
    <citation type="journal article" date="2011" name="MBio">
        <title>Novel metabolic attributes of the genus Cyanothece, comprising a group of unicellular nitrogen-fixing Cyanobacteria.</title>
        <authorList>
            <person name="Bandyopadhyay A."/>
            <person name="Elvitigala T."/>
            <person name="Welsh E."/>
            <person name="Stockel J."/>
            <person name="Liberton M."/>
            <person name="Min H."/>
            <person name="Sherman L.A."/>
            <person name="Pakrasi H.B."/>
        </authorList>
    </citation>
    <scope>NUCLEOTIDE SEQUENCE [LARGE SCALE GENOMIC DNA]</scope>
    <source>
        <strain>PCC 7425 / ATCC 29141</strain>
    </source>
</reference>
<dbReference type="EMBL" id="CP001344">
    <property type="protein sequence ID" value="ACL44138.1"/>
    <property type="molecule type" value="Genomic_DNA"/>
</dbReference>
<dbReference type="SMR" id="B8HRF0"/>
<dbReference type="STRING" id="395961.Cyan7425_1770"/>
<dbReference type="KEGG" id="cyn:Cyan7425_1770"/>
<dbReference type="eggNOG" id="ENOG502ZMJ2">
    <property type="taxonomic scope" value="Bacteria"/>
</dbReference>
<dbReference type="HOGENOM" id="CLU_092204_1_0_3"/>
<dbReference type="OrthoDB" id="464381at2"/>
<dbReference type="GO" id="GO:0009538">
    <property type="term" value="C:photosystem I reaction center"/>
    <property type="evidence" value="ECO:0007669"/>
    <property type="project" value="InterPro"/>
</dbReference>
<dbReference type="GO" id="GO:0031676">
    <property type="term" value="C:plasma membrane-derived thylakoid membrane"/>
    <property type="evidence" value="ECO:0007669"/>
    <property type="project" value="UniProtKB-SubCell"/>
</dbReference>
<dbReference type="GO" id="GO:0015979">
    <property type="term" value="P:photosynthesis"/>
    <property type="evidence" value="ECO:0007669"/>
    <property type="project" value="UniProtKB-UniRule"/>
</dbReference>
<dbReference type="Gene3D" id="1.20.1240.10">
    <property type="entry name" value="Photosystem I PsaL, reaction centre subunit XI"/>
    <property type="match status" value="1"/>
</dbReference>
<dbReference type="HAMAP" id="MF_00447">
    <property type="entry name" value="PSI_PsaL"/>
    <property type="match status" value="1"/>
</dbReference>
<dbReference type="InterPro" id="IPR003757">
    <property type="entry name" value="PSI_PsaL"/>
</dbReference>
<dbReference type="InterPro" id="IPR036592">
    <property type="entry name" value="PSI_PsaL_sf"/>
</dbReference>
<dbReference type="InterPro" id="IPR022980">
    <property type="entry name" value="PSI_suXI"/>
</dbReference>
<dbReference type="NCBIfam" id="NF001926">
    <property type="entry name" value="PRK00704.1-3"/>
    <property type="match status" value="1"/>
</dbReference>
<dbReference type="PANTHER" id="PTHR34803">
    <property type="entry name" value="PHOTOSYSTEM I REACTION CENTER SUBUNIT XI, CHLOROPLASTIC"/>
    <property type="match status" value="1"/>
</dbReference>
<dbReference type="PANTHER" id="PTHR34803:SF2">
    <property type="entry name" value="PHOTOSYSTEM I REACTION CENTER SUBUNIT XI, CHLOROPLASTIC"/>
    <property type="match status" value="1"/>
</dbReference>
<dbReference type="Pfam" id="PF02605">
    <property type="entry name" value="PsaL"/>
    <property type="match status" value="1"/>
</dbReference>
<dbReference type="SUPFAM" id="SSF81568">
    <property type="entry name" value="Photosystem I reaction center subunit XI, PsaL"/>
    <property type="match status" value="1"/>
</dbReference>
<evidence type="ECO:0000255" key="1">
    <source>
        <dbReference type="HAMAP-Rule" id="MF_00447"/>
    </source>
</evidence>